<evidence type="ECO:0000255" key="1">
    <source>
        <dbReference type="HAMAP-Rule" id="MF_00454"/>
    </source>
</evidence>
<proteinExistence type="inferred from homology"/>
<name>FLUC_SHEB9</name>
<gene>
    <name evidence="1" type="primary">fluC</name>
    <name evidence="1" type="synonym">crcB</name>
    <name type="ordered locus">Sbal195_2320</name>
</gene>
<comment type="function">
    <text evidence="1">Fluoride-specific ion channel. Important for reducing fluoride concentration in the cell, thus reducing its toxicity.</text>
</comment>
<comment type="catalytic activity">
    <reaction evidence="1">
        <text>fluoride(in) = fluoride(out)</text>
        <dbReference type="Rhea" id="RHEA:76159"/>
        <dbReference type="ChEBI" id="CHEBI:17051"/>
    </reaction>
    <physiologicalReaction direction="left-to-right" evidence="1">
        <dbReference type="Rhea" id="RHEA:76160"/>
    </physiologicalReaction>
</comment>
<comment type="activity regulation">
    <text evidence="1">Na(+) is not transported, but it plays an essential structural role and its presence is essential for fluoride channel function.</text>
</comment>
<comment type="subcellular location">
    <subcellularLocation>
        <location evidence="1">Cell inner membrane</location>
        <topology evidence="1">Multi-pass membrane protein</topology>
    </subcellularLocation>
</comment>
<comment type="similarity">
    <text evidence="1">Belongs to the fluoride channel Fluc/FEX (TC 1.A.43) family.</text>
</comment>
<organism>
    <name type="scientific">Shewanella baltica (strain OS195)</name>
    <dbReference type="NCBI Taxonomy" id="399599"/>
    <lineage>
        <taxon>Bacteria</taxon>
        <taxon>Pseudomonadati</taxon>
        <taxon>Pseudomonadota</taxon>
        <taxon>Gammaproteobacteria</taxon>
        <taxon>Alteromonadales</taxon>
        <taxon>Shewanellaceae</taxon>
        <taxon>Shewanella</taxon>
    </lineage>
</organism>
<keyword id="KW-0997">Cell inner membrane</keyword>
<keyword id="KW-1003">Cell membrane</keyword>
<keyword id="KW-0407">Ion channel</keyword>
<keyword id="KW-0406">Ion transport</keyword>
<keyword id="KW-0472">Membrane</keyword>
<keyword id="KW-0479">Metal-binding</keyword>
<keyword id="KW-0915">Sodium</keyword>
<keyword id="KW-0812">Transmembrane</keyword>
<keyword id="KW-1133">Transmembrane helix</keyword>
<keyword id="KW-0813">Transport</keyword>
<reference key="1">
    <citation type="submission" date="2007-11" db="EMBL/GenBank/DDBJ databases">
        <title>Complete sequence of chromosome of Shewanella baltica OS195.</title>
        <authorList>
            <consortium name="US DOE Joint Genome Institute"/>
            <person name="Copeland A."/>
            <person name="Lucas S."/>
            <person name="Lapidus A."/>
            <person name="Barry K."/>
            <person name="Glavina del Rio T."/>
            <person name="Dalin E."/>
            <person name="Tice H."/>
            <person name="Pitluck S."/>
            <person name="Chain P."/>
            <person name="Malfatti S."/>
            <person name="Shin M."/>
            <person name="Vergez L."/>
            <person name="Schmutz J."/>
            <person name="Larimer F."/>
            <person name="Land M."/>
            <person name="Hauser L."/>
            <person name="Kyrpides N."/>
            <person name="Kim E."/>
            <person name="Brettar I."/>
            <person name="Rodrigues J."/>
            <person name="Konstantinidis K."/>
            <person name="Klappenbach J."/>
            <person name="Hofle M."/>
            <person name="Tiedje J."/>
            <person name="Richardson P."/>
        </authorList>
    </citation>
    <scope>NUCLEOTIDE SEQUENCE [LARGE SCALE GENOMIC DNA]</scope>
    <source>
        <strain>OS195</strain>
    </source>
</reference>
<protein>
    <recommendedName>
        <fullName evidence="1">Fluoride-specific ion channel FluC</fullName>
    </recommendedName>
</protein>
<dbReference type="EMBL" id="CP000891">
    <property type="protein sequence ID" value="ABX49488.1"/>
    <property type="molecule type" value="Genomic_DNA"/>
</dbReference>
<dbReference type="RefSeq" id="WP_006081645.1">
    <property type="nucleotide sequence ID" value="NC_009997.1"/>
</dbReference>
<dbReference type="SMR" id="A9L270"/>
<dbReference type="GeneID" id="11772448"/>
<dbReference type="KEGG" id="sbn:Sbal195_2320"/>
<dbReference type="HOGENOM" id="CLU_114342_3_0_6"/>
<dbReference type="Proteomes" id="UP000000770">
    <property type="component" value="Chromosome"/>
</dbReference>
<dbReference type="GO" id="GO:0005886">
    <property type="term" value="C:plasma membrane"/>
    <property type="evidence" value="ECO:0007669"/>
    <property type="project" value="UniProtKB-SubCell"/>
</dbReference>
<dbReference type="GO" id="GO:0062054">
    <property type="term" value="F:fluoride channel activity"/>
    <property type="evidence" value="ECO:0007669"/>
    <property type="project" value="UniProtKB-UniRule"/>
</dbReference>
<dbReference type="GO" id="GO:0046872">
    <property type="term" value="F:metal ion binding"/>
    <property type="evidence" value="ECO:0007669"/>
    <property type="project" value="UniProtKB-KW"/>
</dbReference>
<dbReference type="GO" id="GO:0140114">
    <property type="term" value="P:cellular detoxification of fluoride"/>
    <property type="evidence" value="ECO:0007669"/>
    <property type="project" value="UniProtKB-UniRule"/>
</dbReference>
<dbReference type="HAMAP" id="MF_00454">
    <property type="entry name" value="FluC"/>
    <property type="match status" value="1"/>
</dbReference>
<dbReference type="InterPro" id="IPR003691">
    <property type="entry name" value="FluC"/>
</dbReference>
<dbReference type="NCBIfam" id="TIGR00494">
    <property type="entry name" value="crcB"/>
    <property type="match status" value="1"/>
</dbReference>
<dbReference type="PANTHER" id="PTHR28259">
    <property type="entry name" value="FLUORIDE EXPORT PROTEIN 1-RELATED"/>
    <property type="match status" value="1"/>
</dbReference>
<dbReference type="PANTHER" id="PTHR28259:SF1">
    <property type="entry name" value="FLUORIDE EXPORT PROTEIN 1-RELATED"/>
    <property type="match status" value="1"/>
</dbReference>
<dbReference type="Pfam" id="PF02537">
    <property type="entry name" value="CRCB"/>
    <property type="match status" value="1"/>
</dbReference>
<accession>A9L270</accession>
<sequence>MNNLLLVALGGSIGAVFRYLISIFMIQVFGSSFPFGTLLVNVLGSFLMGVIYALGQMSHISPELKALIGIGLLGALTTFSTFSNETLLLLQEGDWLKATLNVVLNLSLCLFMVYLGQQLVFSRI</sequence>
<feature type="chain" id="PRO_1000081019" description="Fluoride-specific ion channel FluC">
    <location>
        <begin position="1"/>
        <end position="124"/>
    </location>
</feature>
<feature type="transmembrane region" description="Helical" evidence="1">
    <location>
        <begin position="4"/>
        <end position="24"/>
    </location>
</feature>
<feature type="transmembrane region" description="Helical" evidence="1">
    <location>
        <begin position="35"/>
        <end position="55"/>
    </location>
</feature>
<feature type="transmembrane region" description="Helical" evidence="1">
    <location>
        <begin position="60"/>
        <end position="80"/>
    </location>
</feature>
<feature type="transmembrane region" description="Helical" evidence="1">
    <location>
        <begin position="102"/>
        <end position="122"/>
    </location>
</feature>
<feature type="binding site" evidence="1">
    <location>
        <position position="74"/>
    </location>
    <ligand>
        <name>Na(+)</name>
        <dbReference type="ChEBI" id="CHEBI:29101"/>
        <note>structural</note>
    </ligand>
</feature>
<feature type="binding site" evidence="1">
    <location>
        <position position="77"/>
    </location>
    <ligand>
        <name>Na(+)</name>
        <dbReference type="ChEBI" id="CHEBI:29101"/>
        <note>structural</note>
    </ligand>
</feature>